<dbReference type="EC" id="2.1.2.1" evidence="1"/>
<dbReference type="EMBL" id="CP000252">
    <property type="protein sequence ID" value="ABC76065.1"/>
    <property type="molecule type" value="Genomic_DNA"/>
</dbReference>
<dbReference type="RefSeq" id="WP_011416100.1">
    <property type="nucleotide sequence ID" value="NC_007759.1"/>
</dbReference>
<dbReference type="SMR" id="Q2LQM6"/>
<dbReference type="FunCoup" id="Q2LQM6">
    <property type="interactions" value="496"/>
</dbReference>
<dbReference type="STRING" id="56780.SYN_02367"/>
<dbReference type="KEGG" id="sat:SYN_02367"/>
<dbReference type="eggNOG" id="COG0112">
    <property type="taxonomic scope" value="Bacteria"/>
</dbReference>
<dbReference type="HOGENOM" id="CLU_022477_2_1_7"/>
<dbReference type="InParanoid" id="Q2LQM6"/>
<dbReference type="OrthoDB" id="9803846at2"/>
<dbReference type="UniPathway" id="UPA00193"/>
<dbReference type="UniPathway" id="UPA00288">
    <property type="reaction ID" value="UER01023"/>
</dbReference>
<dbReference type="Proteomes" id="UP000001933">
    <property type="component" value="Chromosome"/>
</dbReference>
<dbReference type="GO" id="GO:0005829">
    <property type="term" value="C:cytosol"/>
    <property type="evidence" value="ECO:0007669"/>
    <property type="project" value="TreeGrafter"/>
</dbReference>
<dbReference type="GO" id="GO:0004372">
    <property type="term" value="F:glycine hydroxymethyltransferase activity"/>
    <property type="evidence" value="ECO:0007669"/>
    <property type="project" value="UniProtKB-UniRule"/>
</dbReference>
<dbReference type="GO" id="GO:0030170">
    <property type="term" value="F:pyridoxal phosphate binding"/>
    <property type="evidence" value="ECO:0007669"/>
    <property type="project" value="UniProtKB-UniRule"/>
</dbReference>
<dbReference type="GO" id="GO:0019264">
    <property type="term" value="P:glycine biosynthetic process from serine"/>
    <property type="evidence" value="ECO:0007669"/>
    <property type="project" value="UniProtKB-UniRule"/>
</dbReference>
<dbReference type="GO" id="GO:0035999">
    <property type="term" value="P:tetrahydrofolate interconversion"/>
    <property type="evidence" value="ECO:0007669"/>
    <property type="project" value="UniProtKB-UniRule"/>
</dbReference>
<dbReference type="CDD" id="cd00378">
    <property type="entry name" value="SHMT"/>
    <property type="match status" value="1"/>
</dbReference>
<dbReference type="FunFam" id="3.40.640.10:FF:000001">
    <property type="entry name" value="Serine hydroxymethyltransferase"/>
    <property type="match status" value="1"/>
</dbReference>
<dbReference type="FunFam" id="3.90.1150.10:FF:000003">
    <property type="entry name" value="Serine hydroxymethyltransferase"/>
    <property type="match status" value="1"/>
</dbReference>
<dbReference type="Gene3D" id="3.90.1150.10">
    <property type="entry name" value="Aspartate Aminotransferase, domain 1"/>
    <property type="match status" value="1"/>
</dbReference>
<dbReference type="Gene3D" id="3.40.640.10">
    <property type="entry name" value="Type I PLP-dependent aspartate aminotransferase-like (Major domain)"/>
    <property type="match status" value="1"/>
</dbReference>
<dbReference type="HAMAP" id="MF_00051">
    <property type="entry name" value="SHMT"/>
    <property type="match status" value="1"/>
</dbReference>
<dbReference type="InterPro" id="IPR015424">
    <property type="entry name" value="PyrdxlP-dep_Trfase"/>
</dbReference>
<dbReference type="InterPro" id="IPR015421">
    <property type="entry name" value="PyrdxlP-dep_Trfase_major"/>
</dbReference>
<dbReference type="InterPro" id="IPR015422">
    <property type="entry name" value="PyrdxlP-dep_Trfase_small"/>
</dbReference>
<dbReference type="InterPro" id="IPR001085">
    <property type="entry name" value="Ser_HO-MeTrfase"/>
</dbReference>
<dbReference type="InterPro" id="IPR049943">
    <property type="entry name" value="Ser_HO-MeTrfase-like"/>
</dbReference>
<dbReference type="InterPro" id="IPR019798">
    <property type="entry name" value="Ser_HO-MeTrfase_PLP_BS"/>
</dbReference>
<dbReference type="InterPro" id="IPR039429">
    <property type="entry name" value="SHMT-like_dom"/>
</dbReference>
<dbReference type="NCBIfam" id="NF000586">
    <property type="entry name" value="PRK00011.1"/>
    <property type="match status" value="1"/>
</dbReference>
<dbReference type="PANTHER" id="PTHR11680">
    <property type="entry name" value="SERINE HYDROXYMETHYLTRANSFERASE"/>
    <property type="match status" value="1"/>
</dbReference>
<dbReference type="PANTHER" id="PTHR11680:SF50">
    <property type="entry name" value="SERINE HYDROXYMETHYLTRANSFERASE"/>
    <property type="match status" value="1"/>
</dbReference>
<dbReference type="Pfam" id="PF00464">
    <property type="entry name" value="SHMT"/>
    <property type="match status" value="1"/>
</dbReference>
<dbReference type="PIRSF" id="PIRSF000412">
    <property type="entry name" value="SHMT"/>
    <property type="match status" value="1"/>
</dbReference>
<dbReference type="SUPFAM" id="SSF53383">
    <property type="entry name" value="PLP-dependent transferases"/>
    <property type="match status" value="1"/>
</dbReference>
<dbReference type="PROSITE" id="PS00096">
    <property type="entry name" value="SHMT"/>
    <property type="match status" value="1"/>
</dbReference>
<name>GLYA_SYNAS</name>
<keyword id="KW-0028">Amino-acid biosynthesis</keyword>
<keyword id="KW-0963">Cytoplasm</keyword>
<keyword id="KW-0554">One-carbon metabolism</keyword>
<keyword id="KW-0663">Pyridoxal phosphate</keyword>
<keyword id="KW-1185">Reference proteome</keyword>
<keyword id="KW-0808">Transferase</keyword>
<reference key="1">
    <citation type="journal article" date="2007" name="Proc. Natl. Acad. Sci. U.S.A.">
        <title>The genome of Syntrophus aciditrophicus: life at the thermodynamic limit of microbial growth.</title>
        <authorList>
            <person name="McInerney M.J."/>
            <person name="Rohlin L."/>
            <person name="Mouttaki H."/>
            <person name="Kim U."/>
            <person name="Krupp R.S."/>
            <person name="Rios-Hernandez L."/>
            <person name="Sieber J."/>
            <person name="Struchtemeyer C.G."/>
            <person name="Bhattacharyya A."/>
            <person name="Campbell J.W."/>
            <person name="Gunsalus R.P."/>
        </authorList>
    </citation>
    <scope>NUCLEOTIDE SEQUENCE [LARGE SCALE GENOMIC DNA]</scope>
    <source>
        <strain>SB</strain>
    </source>
</reference>
<accession>Q2LQM6</accession>
<evidence type="ECO:0000255" key="1">
    <source>
        <dbReference type="HAMAP-Rule" id="MF_00051"/>
    </source>
</evidence>
<gene>
    <name evidence="1" type="primary">glyA</name>
    <name type="ordered locus">SYNAS_01860</name>
    <name type="ORF">SYN_02367</name>
</gene>
<protein>
    <recommendedName>
        <fullName evidence="1">Serine hydroxymethyltransferase</fullName>
        <shortName evidence="1">SHMT</shortName>
        <shortName evidence="1">Serine methylase</shortName>
        <ecNumber evidence="1">2.1.2.1</ecNumber>
    </recommendedName>
</protein>
<proteinExistence type="inferred from homology"/>
<comment type="function">
    <text evidence="1">Catalyzes the reversible interconversion of serine and glycine with tetrahydrofolate (THF) serving as the one-carbon carrier. This reaction serves as the major source of one-carbon groups required for the biosynthesis of purines, thymidylate, methionine, and other important biomolecules. Also exhibits THF-independent aldolase activity toward beta-hydroxyamino acids, producing glycine and aldehydes, via a retro-aldol mechanism.</text>
</comment>
<comment type="catalytic activity">
    <reaction evidence="1">
        <text>(6R)-5,10-methylene-5,6,7,8-tetrahydrofolate + glycine + H2O = (6S)-5,6,7,8-tetrahydrofolate + L-serine</text>
        <dbReference type="Rhea" id="RHEA:15481"/>
        <dbReference type="ChEBI" id="CHEBI:15377"/>
        <dbReference type="ChEBI" id="CHEBI:15636"/>
        <dbReference type="ChEBI" id="CHEBI:33384"/>
        <dbReference type="ChEBI" id="CHEBI:57305"/>
        <dbReference type="ChEBI" id="CHEBI:57453"/>
        <dbReference type="EC" id="2.1.2.1"/>
    </reaction>
</comment>
<comment type="cofactor">
    <cofactor evidence="1">
        <name>pyridoxal 5'-phosphate</name>
        <dbReference type="ChEBI" id="CHEBI:597326"/>
    </cofactor>
</comment>
<comment type="pathway">
    <text evidence="1">One-carbon metabolism; tetrahydrofolate interconversion.</text>
</comment>
<comment type="pathway">
    <text evidence="1">Amino-acid biosynthesis; glycine biosynthesis; glycine from L-serine: step 1/1.</text>
</comment>
<comment type="subunit">
    <text evidence="1">Homodimer.</text>
</comment>
<comment type="subcellular location">
    <subcellularLocation>
        <location evidence="1">Cytoplasm</location>
    </subcellularLocation>
</comment>
<comment type="similarity">
    <text evidence="1">Belongs to the SHMT family.</text>
</comment>
<organism>
    <name type="scientific">Syntrophus aciditrophicus (strain SB)</name>
    <dbReference type="NCBI Taxonomy" id="56780"/>
    <lineage>
        <taxon>Bacteria</taxon>
        <taxon>Pseudomonadati</taxon>
        <taxon>Thermodesulfobacteriota</taxon>
        <taxon>Syntrophia</taxon>
        <taxon>Syntrophales</taxon>
        <taxon>Syntrophaceae</taxon>
        <taxon>Syntrophus</taxon>
    </lineage>
</organism>
<feature type="chain" id="PRO_0000235040" description="Serine hydroxymethyltransferase">
    <location>
        <begin position="1"/>
        <end position="417"/>
    </location>
</feature>
<feature type="binding site" evidence="1">
    <location>
        <position position="117"/>
    </location>
    <ligand>
        <name>(6S)-5,6,7,8-tetrahydrofolate</name>
        <dbReference type="ChEBI" id="CHEBI:57453"/>
    </ligand>
</feature>
<feature type="binding site" evidence="1">
    <location>
        <begin position="121"/>
        <end position="123"/>
    </location>
    <ligand>
        <name>(6S)-5,6,7,8-tetrahydrofolate</name>
        <dbReference type="ChEBI" id="CHEBI:57453"/>
    </ligand>
</feature>
<feature type="site" description="Plays an important role in substrate specificity" evidence="1">
    <location>
        <position position="225"/>
    </location>
</feature>
<feature type="modified residue" description="N6-(pyridoxal phosphate)lysine" evidence="1">
    <location>
        <position position="226"/>
    </location>
</feature>
<sequence length="417" mass="45326">MSALMKTDPEIAEAIRLETRRQAGKLELIASENFVSEAVLEAQGCIMTNKYAEGYPGKRYYGGCEYVDIAENLAIERCKALFGADYVNVQPHSGTQANMAVYFSALSVGDTILGMNLAHGGHLSHGSPANFSGKFYNVVPYGVDRETETIDYNQVEDLALQHKPRMIVVGASAYPRTIDFEKFRAIADKVGALVMADIAHIAGLVATGLHPSPVPVCEYVTSTTHKTLRGPRGGLVMCQASYQKTLSSRVFPGVQGGPLMHIIAAKAVAFKEALTDEFKDYQSQIVKNAQALAKELIGRGYRLVSGGTDNHLLLMDLTDKGLTGKEAQESLDSAGITVNKNGIPFDTRGPMVTSGIRIGTPALTSRGMKEEEMRTIARLIAEVLEHRDNEKHLMAVKEEVGRLCQNFPLYAERIASA</sequence>